<dbReference type="EMBL" id="X04466">
    <property type="protein sequence ID" value="CAA28148.1"/>
    <property type="molecule type" value="Genomic_DNA"/>
</dbReference>
<dbReference type="PIR" id="A03516">
    <property type="entry name" value="QVECK"/>
</dbReference>
<dbReference type="RefSeq" id="NP_052373.1">
    <property type="nucleotide sequence ID" value="NC_002119.1"/>
</dbReference>
<dbReference type="RefSeq" id="WP_010891191.1">
    <property type="nucleotide sequence ID" value="NZ_UNQR01000060.1"/>
</dbReference>
<dbReference type="SMR" id="P02988"/>
<dbReference type="Gene3D" id="3.30.300.250">
    <property type="match status" value="1"/>
</dbReference>
<dbReference type="PROSITE" id="PS51257">
    <property type="entry name" value="PROKAR_LIPOPROTEIN"/>
    <property type="match status" value="1"/>
</dbReference>
<protein>
    <recommendedName>
        <fullName>Protein K</fullName>
    </recommendedName>
</protein>
<keyword id="KW-0614">Plasmid</keyword>
<sequence length="188" mass="21305">MDKRTTLVALVSIIFFTSGCDDQKKGNGNAESTQITKNDITTQLKLDKTQQPDDIEKKIKEIQANSTPEKIKKFNELKDDDPKILRESVVSEIKKKLPLLVDEATLMTDVSTDGGTFSYKYVTKGISASTMESDVWKDAMQKNIKNSYCSDDARLKVFRELFPEGVIYNYYLSDKLIYTYKALPSICS</sequence>
<proteinExistence type="predicted"/>
<feature type="chain" id="PRO_0000068358" description="Protein K">
    <location>
        <begin position="1"/>
        <end position="188"/>
    </location>
</feature>
<organism>
    <name type="scientific">Escherichia coli</name>
    <dbReference type="NCBI Taxonomy" id="562"/>
    <lineage>
        <taxon>Bacteria</taxon>
        <taxon>Pseudomonadati</taxon>
        <taxon>Pseudomonadota</taxon>
        <taxon>Gammaproteobacteria</taxon>
        <taxon>Enterobacterales</taxon>
        <taxon>Enterobacteriaceae</taxon>
        <taxon>Escherichia</taxon>
    </lineage>
</organism>
<geneLocation type="plasmid">
    <name>Clo DF13</name>
</geneLocation>
<accession>P02988</accession>
<comment type="miscellaneous">
    <text>Plasmid Clo DF13 originates from Enterobacter cloacae but is stably maintained in and studied mostly from E.coli.</text>
</comment>
<reference key="1">
    <citation type="journal article" date="1986" name="Plasmid">
        <title>The complete nucleotide sequence of the bacteriocinogenic plasmid CloDF13.</title>
        <authorList>
            <person name="Nijkamp H.J.J."/>
            <person name="de Lang R."/>
            <person name="Stuitje A.R."/>
            <person name="van den Elsen P.J.M."/>
            <person name="Veltkamp E."/>
            <person name="van Putten A.J."/>
        </authorList>
    </citation>
    <scope>NUCLEOTIDE SEQUENCE [GENOMIC DNA]</scope>
</reference>
<reference key="2">
    <citation type="journal article" date="1983" name="Nucleic Acids Res.">
        <title>Structure and regulation of gene expression of a Clo DF13 plasmid DNA region involved in plasmid segregation and incompatibility.</title>
        <authorList>
            <person name="van den Elzen P.J.M."/>
            <person name="Hakkaart M.J.J."/>
            <person name="van Putten A.J."/>
            <person name="Walters H.H.B."/>
            <person name="Veltkamp E."/>
            <person name="Nijkamp H.J.J."/>
        </authorList>
    </citation>
    <scope>NUCLEOTIDE SEQUENCE [GENOMIC DNA]</scope>
</reference>
<name>GENK_ECOLX</name>
<gene>
    <name type="primary">K</name>
    <name type="synonym">cun</name>
</gene>